<organism>
    <name type="scientific">Oryza sativa subsp. japonica</name>
    <name type="common">Rice</name>
    <dbReference type="NCBI Taxonomy" id="39947"/>
    <lineage>
        <taxon>Eukaryota</taxon>
        <taxon>Viridiplantae</taxon>
        <taxon>Streptophyta</taxon>
        <taxon>Embryophyta</taxon>
        <taxon>Tracheophyta</taxon>
        <taxon>Spermatophyta</taxon>
        <taxon>Magnoliopsida</taxon>
        <taxon>Liliopsida</taxon>
        <taxon>Poales</taxon>
        <taxon>Poaceae</taxon>
        <taxon>BOP clade</taxon>
        <taxon>Oryzoideae</taxon>
        <taxon>Oryzeae</taxon>
        <taxon>Oryzinae</taxon>
        <taxon>Oryza</taxon>
        <taxon>Oryza sativa</taxon>
    </lineage>
</organism>
<feature type="chain" id="PRO_0000338441" description="Probable calcium-binding protein CML27">
    <location>
        <begin position="1"/>
        <end position="190"/>
    </location>
</feature>
<feature type="domain" description="EF-hand 1" evidence="2">
    <location>
        <begin position="27"/>
        <end position="62"/>
    </location>
</feature>
<feature type="domain" description="EF-hand 2" evidence="2">
    <location>
        <begin position="115"/>
        <end position="150"/>
    </location>
</feature>
<feature type="domain" description="EF-hand 3" evidence="2">
    <location>
        <begin position="153"/>
        <end position="188"/>
    </location>
</feature>
<feature type="binding site" evidence="2">
    <location>
        <position position="40"/>
    </location>
    <ligand>
        <name>Ca(2+)</name>
        <dbReference type="ChEBI" id="CHEBI:29108"/>
        <label>1</label>
    </ligand>
</feature>
<feature type="binding site" evidence="2">
    <location>
        <position position="42"/>
    </location>
    <ligand>
        <name>Ca(2+)</name>
        <dbReference type="ChEBI" id="CHEBI:29108"/>
        <label>1</label>
    </ligand>
</feature>
<feature type="binding site" evidence="2">
    <location>
        <position position="44"/>
    </location>
    <ligand>
        <name>Ca(2+)</name>
        <dbReference type="ChEBI" id="CHEBI:29108"/>
        <label>1</label>
    </ligand>
</feature>
<feature type="binding site" evidence="2">
    <location>
        <position position="46"/>
    </location>
    <ligand>
        <name>Ca(2+)</name>
        <dbReference type="ChEBI" id="CHEBI:29108"/>
        <label>1</label>
    </ligand>
</feature>
<feature type="binding site" evidence="2">
    <location>
        <position position="51"/>
    </location>
    <ligand>
        <name>Ca(2+)</name>
        <dbReference type="ChEBI" id="CHEBI:29108"/>
        <label>1</label>
    </ligand>
</feature>
<feature type="binding site" evidence="2">
    <location>
        <position position="128"/>
    </location>
    <ligand>
        <name>Ca(2+)</name>
        <dbReference type="ChEBI" id="CHEBI:29108"/>
        <label>2</label>
    </ligand>
</feature>
<feature type="binding site" evidence="2">
    <location>
        <position position="130"/>
    </location>
    <ligand>
        <name>Ca(2+)</name>
        <dbReference type="ChEBI" id="CHEBI:29108"/>
        <label>2</label>
    </ligand>
</feature>
<feature type="binding site" evidence="2">
    <location>
        <position position="132"/>
    </location>
    <ligand>
        <name>Ca(2+)</name>
        <dbReference type="ChEBI" id="CHEBI:29108"/>
        <label>2</label>
    </ligand>
</feature>
<feature type="binding site" evidence="2">
    <location>
        <position position="139"/>
    </location>
    <ligand>
        <name>Ca(2+)</name>
        <dbReference type="ChEBI" id="CHEBI:29108"/>
        <label>2</label>
    </ligand>
</feature>
<feature type="binding site" evidence="2">
    <location>
        <position position="166"/>
    </location>
    <ligand>
        <name>Ca(2+)</name>
        <dbReference type="ChEBI" id="CHEBI:29108"/>
        <label>3</label>
    </ligand>
</feature>
<feature type="binding site" evidence="2">
    <location>
        <position position="168"/>
    </location>
    <ligand>
        <name>Ca(2+)</name>
        <dbReference type="ChEBI" id="CHEBI:29108"/>
        <label>3</label>
    </ligand>
</feature>
<feature type="binding site" evidence="2">
    <location>
        <position position="170"/>
    </location>
    <ligand>
        <name>Ca(2+)</name>
        <dbReference type="ChEBI" id="CHEBI:29108"/>
        <label>3</label>
    </ligand>
</feature>
<feature type="binding site" evidence="2">
    <location>
        <position position="172"/>
    </location>
    <ligand>
        <name>Ca(2+)</name>
        <dbReference type="ChEBI" id="CHEBI:29108"/>
        <label>3</label>
    </ligand>
</feature>
<feature type="binding site" evidence="2">
    <location>
        <position position="177"/>
    </location>
    <ligand>
        <name>Ca(2+)</name>
        <dbReference type="ChEBI" id="CHEBI:29108"/>
        <label>3</label>
    </ligand>
</feature>
<proteinExistence type="evidence at transcript level"/>
<accession>Q10LX4</accession>
<accession>B7F2E8</accession>
<name>CML27_ORYSJ</name>
<reference key="1">
    <citation type="journal article" date="2005" name="Genome Res.">
        <title>Sequence, annotation, and analysis of synteny between rice chromosome 3 and diverged grass species.</title>
        <authorList>
            <consortium name="The rice chromosome 3 sequencing consortium"/>
            <person name="Buell C.R."/>
            <person name="Yuan Q."/>
            <person name="Ouyang S."/>
            <person name="Liu J."/>
            <person name="Zhu W."/>
            <person name="Wang A."/>
            <person name="Maiti R."/>
            <person name="Haas B."/>
            <person name="Wortman J."/>
            <person name="Pertea M."/>
            <person name="Jones K.M."/>
            <person name="Kim M."/>
            <person name="Overton L."/>
            <person name="Tsitrin T."/>
            <person name="Fadrosh D."/>
            <person name="Bera J."/>
            <person name="Weaver B."/>
            <person name="Jin S."/>
            <person name="Johri S."/>
            <person name="Reardon M."/>
            <person name="Webb K."/>
            <person name="Hill J."/>
            <person name="Moffat K."/>
            <person name="Tallon L."/>
            <person name="Van Aken S."/>
            <person name="Lewis M."/>
            <person name="Utterback T."/>
            <person name="Feldblyum T."/>
            <person name="Zismann V."/>
            <person name="Iobst S."/>
            <person name="Hsiao J."/>
            <person name="de Vazeille A.R."/>
            <person name="Salzberg S.L."/>
            <person name="White O."/>
            <person name="Fraser C.M."/>
            <person name="Yu Y."/>
            <person name="Kim H."/>
            <person name="Rambo T."/>
            <person name="Currie J."/>
            <person name="Collura K."/>
            <person name="Kernodle-Thompson S."/>
            <person name="Wei F."/>
            <person name="Kudrna K."/>
            <person name="Ammiraju J.S.S."/>
            <person name="Luo M."/>
            <person name="Goicoechea J.L."/>
            <person name="Wing R.A."/>
            <person name="Henry D."/>
            <person name="Oates R."/>
            <person name="Palmer M."/>
            <person name="Pries G."/>
            <person name="Saski C."/>
            <person name="Simmons J."/>
            <person name="Soderlund C."/>
            <person name="Nelson W."/>
            <person name="de la Bastide M."/>
            <person name="Spiegel L."/>
            <person name="Nascimento L."/>
            <person name="Huang E."/>
            <person name="Preston R."/>
            <person name="Zutavern T."/>
            <person name="Palmer L."/>
            <person name="O'Shaughnessy A."/>
            <person name="Dike S."/>
            <person name="McCombie W.R."/>
            <person name="Minx P."/>
            <person name="Cordum H."/>
            <person name="Wilson R."/>
            <person name="Jin W."/>
            <person name="Lee H.R."/>
            <person name="Jiang J."/>
            <person name="Jackson S."/>
        </authorList>
    </citation>
    <scope>NUCLEOTIDE SEQUENCE [LARGE SCALE GENOMIC DNA]</scope>
    <source>
        <strain>cv. Nipponbare</strain>
    </source>
</reference>
<reference key="2">
    <citation type="journal article" date="2005" name="Nature">
        <title>The map-based sequence of the rice genome.</title>
        <authorList>
            <consortium name="International rice genome sequencing project (IRGSP)"/>
        </authorList>
    </citation>
    <scope>NUCLEOTIDE SEQUENCE [LARGE SCALE GENOMIC DNA]</scope>
    <source>
        <strain>cv. Nipponbare</strain>
    </source>
</reference>
<reference key="3">
    <citation type="journal article" date="2008" name="Nucleic Acids Res.">
        <title>The rice annotation project database (RAP-DB): 2008 update.</title>
        <authorList>
            <consortium name="The rice annotation project (RAP)"/>
        </authorList>
    </citation>
    <scope>GENOME REANNOTATION</scope>
    <source>
        <strain>cv. Nipponbare</strain>
    </source>
</reference>
<reference key="4">
    <citation type="journal article" date="2013" name="Rice">
        <title>Improvement of the Oryza sativa Nipponbare reference genome using next generation sequence and optical map data.</title>
        <authorList>
            <person name="Kawahara Y."/>
            <person name="de la Bastide M."/>
            <person name="Hamilton J.P."/>
            <person name="Kanamori H."/>
            <person name="McCombie W.R."/>
            <person name="Ouyang S."/>
            <person name="Schwartz D.C."/>
            <person name="Tanaka T."/>
            <person name="Wu J."/>
            <person name="Zhou S."/>
            <person name="Childs K.L."/>
            <person name="Davidson R.M."/>
            <person name="Lin H."/>
            <person name="Quesada-Ocampo L."/>
            <person name="Vaillancourt B."/>
            <person name="Sakai H."/>
            <person name="Lee S.S."/>
            <person name="Kim J."/>
            <person name="Numa H."/>
            <person name="Itoh T."/>
            <person name="Buell C.R."/>
            <person name="Matsumoto T."/>
        </authorList>
    </citation>
    <scope>GENOME REANNOTATION</scope>
    <source>
        <strain>cv. Nipponbare</strain>
    </source>
</reference>
<reference key="5">
    <citation type="journal article" date="2003" name="Science">
        <title>Collection, mapping, and annotation of over 28,000 cDNA clones from japonica rice.</title>
        <authorList>
            <consortium name="The rice full-length cDNA consortium"/>
        </authorList>
    </citation>
    <scope>NUCLEOTIDE SEQUENCE [LARGE SCALE MRNA]</scope>
    <source>
        <strain>cv. Nipponbare</strain>
    </source>
</reference>
<reference key="6">
    <citation type="journal article" date="2007" name="BMC Plant Biol.">
        <title>Genome-wide identification and analyses of the rice calmodulin and related potential calcium sensor proteins.</title>
        <authorList>
            <person name="Boonburapong B."/>
            <person name="Buaboocha T."/>
        </authorList>
    </citation>
    <scope>GENE FAMILY</scope>
    <scope>NOMENCLATURE</scope>
</reference>
<comment type="function">
    <text evidence="1">Potential calcium sensor.</text>
</comment>
<comment type="caution">
    <text evidence="3">Although assigned as a calmodulin family member by PubMed:17263873, it only contains EF-hand domains.</text>
</comment>
<sequence>MDAAGVAAKPSLSRKPSPSFRLRNGSLNALRLRRVFDLFDRNGDGEITLDEMASALDALGLGADRAGLEATVGGYIPAGAAGLRFGDFEALHRALGDALFGPVEEEEPGKQGEDDDEGDMKEAFRVFDEDGDGFISAAELQAVLKKLGLPEARNLATVQEMICNVDRDCDGRVDFGEFKCMMQGITVWGA</sequence>
<evidence type="ECO:0000250" key="1"/>
<evidence type="ECO:0000255" key="2">
    <source>
        <dbReference type="PROSITE-ProRule" id="PRU00448"/>
    </source>
</evidence>
<evidence type="ECO:0000305" key="3"/>
<keyword id="KW-0106">Calcium</keyword>
<keyword id="KW-0479">Metal-binding</keyword>
<keyword id="KW-1185">Reference proteome</keyword>
<keyword id="KW-0677">Repeat</keyword>
<gene>
    <name type="primary">CML27</name>
    <name type="ordered locus">Os03g0331700</name>
    <name type="ordered locus">LOC_Os03g21380</name>
</gene>
<dbReference type="EMBL" id="DP000009">
    <property type="protein sequence ID" value="ABF95765.1"/>
    <property type="molecule type" value="Genomic_DNA"/>
</dbReference>
<dbReference type="EMBL" id="DP000009">
    <property type="protein sequence ID" value="ABF95766.1"/>
    <property type="molecule type" value="Genomic_DNA"/>
</dbReference>
<dbReference type="EMBL" id="AP008209">
    <property type="protein sequence ID" value="BAF11926.1"/>
    <property type="molecule type" value="Genomic_DNA"/>
</dbReference>
<dbReference type="EMBL" id="AP014959">
    <property type="protein sequence ID" value="BAS84035.1"/>
    <property type="molecule type" value="Genomic_DNA"/>
</dbReference>
<dbReference type="EMBL" id="AK109470">
    <property type="status" value="NOT_ANNOTATED_CDS"/>
    <property type="molecule type" value="mRNA"/>
</dbReference>
<dbReference type="EMBL" id="AK109541">
    <property type="protein sequence ID" value="BAG98795.1"/>
    <property type="molecule type" value="mRNA"/>
</dbReference>
<dbReference type="RefSeq" id="XP_015627778.1">
    <property type="nucleotide sequence ID" value="XM_015772292.1"/>
</dbReference>
<dbReference type="SMR" id="Q10LX4"/>
<dbReference type="FunCoup" id="Q10LX4">
    <property type="interactions" value="214"/>
</dbReference>
<dbReference type="STRING" id="39947.Q10LX4"/>
<dbReference type="PaxDb" id="39947-Q10LX4"/>
<dbReference type="EnsemblPlants" id="Os03t0331700-02">
    <property type="protein sequence ID" value="Os03t0331700-02"/>
    <property type="gene ID" value="Os03g0331700"/>
</dbReference>
<dbReference type="Gramene" id="Os03t0331700-02">
    <property type="protein sequence ID" value="Os03t0331700-02"/>
    <property type="gene ID" value="Os03g0331700"/>
</dbReference>
<dbReference type="KEGG" id="dosa:Os03g0331700"/>
<dbReference type="eggNOG" id="KOG0027">
    <property type="taxonomic scope" value="Eukaryota"/>
</dbReference>
<dbReference type="HOGENOM" id="CLU_061288_20_3_1"/>
<dbReference type="InParanoid" id="Q10LX4"/>
<dbReference type="OMA" id="LWEAFKV"/>
<dbReference type="OrthoDB" id="26525at2759"/>
<dbReference type="Proteomes" id="UP000000763">
    <property type="component" value="Chromosome 3"/>
</dbReference>
<dbReference type="Proteomes" id="UP000059680">
    <property type="component" value="Chromosome 3"/>
</dbReference>
<dbReference type="GO" id="GO:0005509">
    <property type="term" value="F:calcium ion binding"/>
    <property type="evidence" value="ECO:0000318"/>
    <property type="project" value="GO_Central"/>
</dbReference>
<dbReference type="CDD" id="cd00051">
    <property type="entry name" value="EFh"/>
    <property type="match status" value="1"/>
</dbReference>
<dbReference type="FunFam" id="1.10.238.10:FF:000427">
    <property type="entry name" value="Probable calcium-binding protein CML27"/>
    <property type="match status" value="1"/>
</dbReference>
<dbReference type="FunFam" id="1.10.238.10:FF:000480">
    <property type="entry name" value="Probable calcium-binding protein CML27"/>
    <property type="match status" value="1"/>
</dbReference>
<dbReference type="Gene3D" id="1.10.238.10">
    <property type="entry name" value="EF-hand"/>
    <property type="match status" value="2"/>
</dbReference>
<dbReference type="InterPro" id="IPR011992">
    <property type="entry name" value="EF-hand-dom_pair"/>
</dbReference>
<dbReference type="InterPro" id="IPR018247">
    <property type="entry name" value="EF_Hand_1_Ca_BS"/>
</dbReference>
<dbReference type="InterPro" id="IPR002048">
    <property type="entry name" value="EF_hand_dom"/>
</dbReference>
<dbReference type="InterPro" id="IPR039647">
    <property type="entry name" value="EF_hand_pair_protein_CML-like"/>
</dbReference>
<dbReference type="PANTHER" id="PTHR10891">
    <property type="entry name" value="EF-HAND CALCIUM-BINDING DOMAIN CONTAINING PROTEIN"/>
    <property type="match status" value="1"/>
</dbReference>
<dbReference type="Pfam" id="PF13405">
    <property type="entry name" value="EF-hand_6"/>
    <property type="match status" value="1"/>
</dbReference>
<dbReference type="Pfam" id="PF13499">
    <property type="entry name" value="EF-hand_7"/>
    <property type="match status" value="1"/>
</dbReference>
<dbReference type="SMART" id="SM00054">
    <property type="entry name" value="EFh"/>
    <property type="match status" value="3"/>
</dbReference>
<dbReference type="SUPFAM" id="SSF47473">
    <property type="entry name" value="EF-hand"/>
    <property type="match status" value="1"/>
</dbReference>
<dbReference type="PROSITE" id="PS00018">
    <property type="entry name" value="EF_HAND_1"/>
    <property type="match status" value="3"/>
</dbReference>
<dbReference type="PROSITE" id="PS50222">
    <property type="entry name" value="EF_HAND_2"/>
    <property type="match status" value="3"/>
</dbReference>
<protein>
    <recommendedName>
        <fullName>Probable calcium-binding protein CML27</fullName>
    </recommendedName>
    <alternativeName>
        <fullName>Calmodulin-like protein 27</fullName>
    </alternativeName>
</protein>